<comment type="function">
    <text evidence="1">Necessary for normal cell division and for the maintenance of normal septation.</text>
</comment>
<comment type="cofactor">
    <cofactor evidence="1">
        <name>Mg(2+)</name>
        <dbReference type="ChEBI" id="CHEBI:18420"/>
    </cofactor>
</comment>
<comment type="similarity">
    <text evidence="1">Belongs to the TRAFAC class TrmE-Era-EngA-EngB-Septin-like GTPase superfamily. EngB GTPase family.</text>
</comment>
<reference key="1">
    <citation type="journal article" date="2001" name="J. Bacteriol.">
        <title>Genome sequence and comparative analysis of the solvent-producing bacterium Clostridium acetobutylicum.</title>
        <authorList>
            <person name="Noelling J."/>
            <person name="Breton G."/>
            <person name="Omelchenko M.V."/>
            <person name="Makarova K.S."/>
            <person name="Zeng Q."/>
            <person name="Gibson R."/>
            <person name="Lee H.M."/>
            <person name="Dubois J."/>
            <person name="Qiu D."/>
            <person name="Hitti J."/>
            <person name="Wolf Y.I."/>
            <person name="Tatusov R.L."/>
            <person name="Sabathe F."/>
            <person name="Doucette-Stamm L.A."/>
            <person name="Soucaille P."/>
            <person name="Daly M.J."/>
            <person name="Bennett G.N."/>
            <person name="Koonin E.V."/>
            <person name="Smith D.R."/>
        </authorList>
    </citation>
    <scope>NUCLEOTIDE SEQUENCE [LARGE SCALE GENOMIC DNA]</scope>
    <source>
        <strain>ATCC 824 / DSM 792 / JCM 1419 / IAM 19013 / LMG 5710 / NBRC 13948 / NRRL B-527 / VKM B-1787 / 2291 / W</strain>
    </source>
</reference>
<keyword id="KW-0131">Cell cycle</keyword>
<keyword id="KW-0132">Cell division</keyword>
<keyword id="KW-0342">GTP-binding</keyword>
<keyword id="KW-0460">Magnesium</keyword>
<keyword id="KW-0479">Metal-binding</keyword>
<keyword id="KW-0547">Nucleotide-binding</keyword>
<keyword id="KW-1185">Reference proteome</keyword>
<keyword id="KW-0717">Septation</keyword>
<sequence>MIIKQAEFIISAAWKKQFPIDGKDEIAFVGRSNVGKSSLINAITNRRKLVKVSGTPGKTRLVNFFMINNDFYFVDLPGYGYAKVSKKELEKWSQTIEGYLVGREQLKKVILLVDSRHKPTKDDITMYNWIKYYDYKCIVIATKSDKIKRSEKVKNEKLIKETLKFNDSDEFYFFSSATKQGRDELINNICSGINYSENSL</sequence>
<feature type="chain" id="PRO_0000157745" description="Probable GTP-binding protein EngB">
    <location>
        <begin position="1"/>
        <end position="200"/>
    </location>
</feature>
<feature type="domain" description="EngB-type G" evidence="1">
    <location>
        <begin position="22"/>
        <end position="195"/>
    </location>
</feature>
<feature type="binding site" evidence="1">
    <location>
        <begin position="30"/>
        <end position="37"/>
    </location>
    <ligand>
        <name>GTP</name>
        <dbReference type="ChEBI" id="CHEBI:37565"/>
    </ligand>
</feature>
<feature type="binding site" evidence="1">
    <location>
        <position position="37"/>
    </location>
    <ligand>
        <name>Mg(2+)</name>
        <dbReference type="ChEBI" id="CHEBI:18420"/>
    </ligand>
</feature>
<feature type="binding site" evidence="1">
    <location>
        <begin position="57"/>
        <end position="61"/>
    </location>
    <ligand>
        <name>GTP</name>
        <dbReference type="ChEBI" id="CHEBI:37565"/>
    </ligand>
</feature>
<feature type="binding site" evidence="1">
    <location>
        <position position="59"/>
    </location>
    <ligand>
        <name>Mg(2+)</name>
        <dbReference type="ChEBI" id="CHEBI:18420"/>
    </ligand>
</feature>
<feature type="binding site" evidence="1">
    <location>
        <begin position="75"/>
        <end position="78"/>
    </location>
    <ligand>
        <name>GTP</name>
        <dbReference type="ChEBI" id="CHEBI:37565"/>
    </ligand>
</feature>
<feature type="binding site" evidence="1">
    <location>
        <begin position="142"/>
        <end position="145"/>
    </location>
    <ligand>
        <name>GTP</name>
        <dbReference type="ChEBI" id="CHEBI:37565"/>
    </ligand>
</feature>
<feature type="binding site" evidence="1">
    <location>
        <begin position="174"/>
        <end position="176"/>
    </location>
    <ligand>
        <name>GTP</name>
        <dbReference type="ChEBI" id="CHEBI:37565"/>
    </ligand>
</feature>
<gene>
    <name evidence="1" type="primary">engB</name>
    <name type="ordered locus">CA_C2636</name>
</gene>
<accession>Q97FU0</accession>
<proteinExistence type="inferred from homology"/>
<organism>
    <name type="scientific">Clostridium acetobutylicum (strain ATCC 824 / DSM 792 / JCM 1419 / IAM 19013 / LMG 5710 / NBRC 13948 / NRRL B-527 / VKM B-1787 / 2291 / W)</name>
    <dbReference type="NCBI Taxonomy" id="272562"/>
    <lineage>
        <taxon>Bacteria</taxon>
        <taxon>Bacillati</taxon>
        <taxon>Bacillota</taxon>
        <taxon>Clostridia</taxon>
        <taxon>Eubacteriales</taxon>
        <taxon>Clostridiaceae</taxon>
        <taxon>Clostridium</taxon>
    </lineage>
</organism>
<name>ENGB_CLOAB</name>
<evidence type="ECO:0000255" key="1">
    <source>
        <dbReference type="HAMAP-Rule" id="MF_00321"/>
    </source>
</evidence>
<dbReference type="EMBL" id="AE001437">
    <property type="protein sequence ID" value="AAK80583.1"/>
    <property type="molecule type" value="Genomic_DNA"/>
</dbReference>
<dbReference type="PIR" id="D97224">
    <property type="entry name" value="D97224"/>
</dbReference>
<dbReference type="RefSeq" id="NP_349243.1">
    <property type="nucleotide sequence ID" value="NC_003030.1"/>
</dbReference>
<dbReference type="SMR" id="Q97FU0"/>
<dbReference type="STRING" id="272562.CA_C2636"/>
<dbReference type="KEGG" id="cac:CA_C2636"/>
<dbReference type="PATRIC" id="fig|272562.8.peg.2825"/>
<dbReference type="eggNOG" id="COG0218">
    <property type="taxonomic scope" value="Bacteria"/>
</dbReference>
<dbReference type="HOGENOM" id="CLU_033732_3_0_9"/>
<dbReference type="OrthoDB" id="9804921at2"/>
<dbReference type="Proteomes" id="UP000000814">
    <property type="component" value="Chromosome"/>
</dbReference>
<dbReference type="GO" id="GO:0005829">
    <property type="term" value="C:cytosol"/>
    <property type="evidence" value="ECO:0007669"/>
    <property type="project" value="TreeGrafter"/>
</dbReference>
<dbReference type="GO" id="GO:0005525">
    <property type="term" value="F:GTP binding"/>
    <property type="evidence" value="ECO:0007669"/>
    <property type="project" value="UniProtKB-UniRule"/>
</dbReference>
<dbReference type="GO" id="GO:0046872">
    <property type="term" value="F:metal ion binding"/>
    <property type="evidence" value="ECO:0007669"/>
    <property type="project" value="UniProtKB-KW"/>
</dbReference>
<dbReference type="GO" id="GO:0000917">
    <property type="term" value="P:division septum assembly"/>
    <property type="evidence" value="ECO:0007669"/>
    <property type="project" value="UniProtKB-KW"/>
</dbReference>
<dbReference type="CDD" id="cd01876">
    <property type="entry name" value="YihA_EngB"/>
    <property type="match status" value="1"/>
</dbReference>
<dbReference type="FunFam" id="3.40.50.300:FF:000098">
    <property type="entry name" value="Probable GTP-binding protein EngB"/>
    <property type="match status" value="1"/>
</dbReference>
<dbReference type="Gene3D" id="3.40.50.300">
    <property type="entry name" value="P-loop containing nucleotide triphosphate hydrolases"/>
    <property type="match status" value="1"/>
</dbReference>
<dbReference type="HAMAP" id="MF_00321">
    <property type="entry name" value="GTPase_EngB"/>
    <property type="match status" value="1"/>
</dbReference>
<dbReference type="InterPro" id="IPR030393">
    <property type="entry name" value="G_ENGB_dom"/>
</dbReference>
<dbReference type="InterPro" id="IPR006073">
    <property type="entry name" value="GTP-bd"/>
</dbReference>
<dbReference type="InterPro" id="IPR019987">
    <property type="entry name" value="GTP-bd_ribosome_bio_YsxC"/>
</dbReference>
<dbReference type="InterPro" id="IPR027417">
    <property type="entry name" value="P-loop_NTPase"/>
</dbReference>
<dbReference type="NCBIfam" id="TIGR03598">
    <property type="entry name" value="GTPase_YsxC"/>
    <property type="match status" value="1"/>
</dbReference>
<dbReference type="PANTHER" id="PTHR11649:SF13">
    <property type="entry name" value="ENGB-TYPE G DOMAIN-CONTAINING PROTEIN"/>
    <property type="match status" value="1"/>
</dbReference>
<dbReference type="PANTHER" id="PTHR11649">
    <property type="entry name" value="MSS1/TRME-RELATED GTP-BINDING PROTEIN"/>
    <property type="match status" value="1"/>
</dbReference>
<dbReference type="Pfam" id="PF01926">
    <property type="entry name" value="MMR_HSR1"/>
    <property type="match status" value="1"/>
</dbReference>
<dbReference type="SUPFAM" id="SSF52540">
    <property type="entry name" value="P-loop containing nucleoside triphosphate hydrolases"/>
    <property type="match status" value="1"/>
</dbReference>
<dbReference type="PROSITE" id="PS51706">
    <property type="entry name" value="G_ENGB"/>
    <property type="match status" value="1"/>
</dbReference>
<protein>
    <recommendedName>
        <fullName evidence="1">Probable GTP-binding protein EngB</fullName>
    </recommendedName>
</protein>